<sequence>MRKAKPKKRQILPDPVYGDVRVTKFVNHLMYDGKKNTAFSIFYGALDIVKTKLSNEEKSALEIWKAALDNITPQVEVKSRRIGGATFQVPTEIRPERKESISMKNLILYARKRGGKTMADKLAAEIVDAFNNQGAAFKRKEDMHRMAEANRAFAHFRF</sequence>
<name>RS7_PORG3</name>
<feature type="chain" id="PRO_1000125983" description="Small ribosomal subunit protein uS7">
    <location>
        <begin position="1"/>
        <end position="158"/>
    </location>
</feature>
<organism>
    <name type="scientific">Porphyromonas gingivalis (strain ATCC 33277 / DSM 20709 / CIP 103683 / JCM 12257 / NCTC 11834 / 2561)</name>
    <dbReference type="NCBI Taxonomy" id="431947"/>
    <lineage>
        <taxon>Bacteria</taxon>
        <taxon>Pseudomonadati</taxon>
        <taxon>Bacteroidota</taxon>
        <taxon>Bacteroidia</taxon>
        <taxon>Bacteroidales</taxon>
        <taxon>Porphyromonadaceae</taxon>
        <taxon>Porphyromonas</taxon>
    </lineage>
</organism>
<dbReference type="EMBL" id="AP009380">
    <property type="protein sequence ID" value="BAG34390.1"/>
    <property type="molecule type" value="Genomic_DNA"/>
</dbReference>
<dbReference type="RefSeq" id="WP_012458580.1">
    <property type="nucleotide sequence ID" value="NZ_CP025930.1"/>
</dbReference>
<dbReference type="SMR" id="B2RLZ5"/>
<dbReference type="GeneID" id="29257022"/>
<dbReference type="KEGG" id="pgn:PGN_1871"/>
<dbReference type="eggNOG" id="COG0049">
    <property type="taxonomic scope" value="Bacteria"/>
</dbReference>
<dbReference type="HOGENOM" id="CLU_072226_1_1_10"/>
<dbReference type="OrthoDB" id="9807653at2"/>
<dbReference type="BioCyc" id="PGIN431947:G1G2V-2085-MONOMER"/>
<dbReference type="Proteomes" id="UP000008842">
    <property type="component" value="Chromosome"/>
</dbReference>
<dbReference type="GO" id="GO:0015935">
    <property type="term" value="C:small ribosomal subunit"/>
    <property type="evidence" value="ECO:0007669"/>
    <property type="project" value="InterPro"/>
</dbReference>
<dbReference type="GO" id="GO:0019843">
    <property type="term" value="F:rRNA binding"/>
    <property type="evidence" value="ECO:0007669"/>
    <property type="project" value="UniProtKB-UniRule"/>
</dbReference>
<dbReference type="GO" id="GO:0003735">
    <property type="term" value="F:structural constituent of ribosome"/>
    <property type="evidence" value="ECO:0007669"/>
    <property type="project" value="InterPro"/>
</dbReference>
<dbReference type="GO" id="GO:0000049">
    <property type="term" value="F:tRNA binding"/>
    <property type="evidence" value="ECO:0007669"/>
    <property type="project" value="UniProtKB-UniRule"/>
</dbReference>
<dbReference type="GO" id="GO:0006412">
    <property type="term" value="P:translation"/>
    <property type="evidence" value="ECO:0007669"/>
    <property type="project" value="UniProtKB-UniRule"/>
</dbReference>
<dbReference type="CDD" id="cd14869">
    <property type="entry name" value="uS7_Bacteria"/>
    <property type="match status" value="1"/>
</dbReference>
<dbReference type="FunFam" id="1.10.455.10:FF:000001">
    <property type="entry name" value="30S ribosomal protein S7"/>
    <property type="match status" value="1"/>
</dbReference>
<dbReference type="Gene3D" id="1.10.455.10">
    <property type="entry name" value="Ribosomal protein S7 domain"/>
    <property type="match status" value="1"/>
</dbReference>
<dbReference type="HAMAP" id="MF_00480_B">
    <property type="entry name" value="Ribosomal_uS7_B"/>
    <property type="match status" value="1"/>
</dbReference>
<dbReference type="InterPro" id="IPR000235">
    <property type="entry name" value="Ribosomal_uS7"/>
</dbReference>
<dbReference type="InterPro" id="IPR005717">
    <property type="entry name" value="Ribosomal_uS7_bac/org-type"/>
</dbReference>
<dbReference type="InterPro" id="IPR023798">
    <property type="entry name" value="Ribosomal_uS7_dom"/>
</dbReference>
<dbReference type="InterPro" id="IPR036823">
    <property type="entry name" value="Ribosomal_uS7_dom_sf"/>
</dbReference>
<dbReference type="NCBIfam" id="TIGR01029">
    <property type="entry name" value="rpsG_bact"/>
    <property type="match status" value="1"/>
</dbReference>
<dbReference type="PANTHER" id="PTHR11205">
    <property type="entry name" value="RIBOSOMAL PROTEIN S7"/>
    <property type="match status" value="1"/>
</dbReference>
<dbReference type="Pfam" id="PF00177">
    <property type="entry name" value="Ribosomal_S7"/>
    <property type="match status" value="1"/>
</dbReference>
<dbReference type="PIRSF" id="PIRSF002122">
    <property type="entry name" value="RPS7p_RPS7a_RPS5e_RPS7o"/>
    <property type="match status" value="1"/>
</dbReference>
<dbReference type="SUPFAM" id="SSF47973">
    <property type="entry name" value="Ribosomal protein S7"/>
    <property type="match status" value="1"/>
</dbReference>
<evidence type="ECO:0000255" key="1">
    <source>
        <dbReference type="HAMAP-Rule" id="MF_00480"/>
    </source>
</evidence>
<evidence type="ECO:0000305" key="2"/>
<protein>
    <recommendedName>
        <fullName evidence="1">Small ribosomal subunit protein uS7</fullName>
    </recommendedName>
    <alternativeName>
        <fullName evidence="2">30S ribosomal protein S7</fullName>
    </alternativeName>
</protein>
<gene>
    <name evidence="1" type="primary">rpsG</name>
    <name type="ordered locus">PGN_1871</name>
</gene>
<keyword id="KW-0687">Ribonucleoprotein</keyword>
<keyword id="KW-0689">Ribosomal protein</keyword>
<keyword id="KW-0694">RNA-binding</keyword>
<keyword id="KW-0699">rRNA-binding</keyword>
<keyword id="KW-0820">tRNA-binding</keyword>
<accession>B2RLZ5</accession>
<comment type="function">
    <text evidence="1">One of the primary rRNA binding proteins, it binds directly to 16S rRNA where it nucleates assembly of the head domain of the 30S subunit. Is located at the subunit interface close to the decoding center, probably blocks exit of the E-site tRNA.</text>
</comment>
<comment type="subunit">
    <text evidence="1">Part of the 30S ribosomal subunit. Contacts proteins S9 and S11.</text>
</comment>
<comment type="similarity">
    <text evidence="1">Belongs to the universal ribosomal protein uS7 family.</text>
</comment>
<reference key="1">
    <citation type="journal article" date="2008" name="DNA Res.">
        <title>Determination of the genome sequence of Porphyromonas gingivalis strain ATCC 33277 and genomic comparison with strain W83 revealed extensive genome rearrangements in P. gingivalis.</title>
        <authorList>
            <person name="Naito M."/>
            <person name="Hirakawa H."/>
            <person name="Yamashita A."/>
            <person name="Ohara N."/>
            <person name="Shoji M."/>
            <person name="Yukitake H."/>
            <person name="Nakayama K."/>
            <person name="Toh H."/>
            <person name="Yoshimura F."/>
            <person name="Kuhara S."/>
            <person name="Hattori M."/>
            <person name="Hayashi T."/>
            <person name="Nakayama K."/>
        </authorList>
    </citation>
    <scope>NUCLEOTIDE SEQUENCE [LARGE SCALE GENOMIC DNA]</scope>
    <source>
        <strain>ATCC 33277 / DSM 20709 / CIP 103683 / JCM 12257 / NCTC 11834 / 2561</strain>
    </source>
</reference>
<proteinExistence type="inferred from homology"/>